<proteinExistence type="evidence at transcript level"/>
<sequence>MHQPPESTAAATAAADISARKMAHPAMFPRRGSGSGSASALNAAGTGVGSNATSSEDFPPPSLLQPPPPAASSTSGPQPPPPQSLNLLSQAQLQAQPLAPGGTQMKKKSGFQITSVTPAQISASISSNNSIAEDTESYDDLDESHTEDLSSSEILDVSLSRATDLGEPERSSSEETLNNFQEAETPGAVSPNQPHLPQPHLPHLPQQNVVINGNAHPHHLHHHHHIHHGHHLQHGHHHPSHVAVASASIPGGPPPSPVTRKLSTTGSSDSITPVAPTSAVSSSGSPASVMTNMRAPSTTGGIGINSVTGTSTVNNVNITAVGSFNPNVTSSMLGNVNISTSNIPSAASVSVGPGVTSGVNVNILSGMGNGTISSSAAVNSVPNAAAGMTGGSISSQQQQPTVNTSRFRVVKLDSSSEPFKKGRWTCTEFYEKENAVPATEGVLINKVVETVKQNPIEVTSERESTSGSSVSSSVSTRSHYTESVGSGEMGAPTVVVQQQQQQQQQQPALQGVTLQQMDFGSTGPQSIPAVSIPQSISQSQISQVQLQSQELSYQQKQGLQPVPLQATMSAATGIQPSPVNVVGVTSALGQQPSISSLAQPQLPYSQAAPPVQTPLPGAPPPQQLQYGQQQPMVSTQMAPGHVKSVTQNPASEYVQQQPILQTAMSSGQPSSAGVGAGTTVIPVAQPQGIQLPVQPTAVPAQPTGASVQPVGQAQAAVSAVPTGSQIANIGQQANIPTAVQQPSTQVPPSVIQQGAPPSSQVVPPAQTGIIHQGVQTSAPSLPQQLVIASQSSLLTVPPQPQGVEPVAQGIVSQQLPAVSPLPSASSISVTSQVSSAGPSGMPSAPTNLVPPQNIAQTPATQNGNLVQSVSQPPLIATNINLPLAQQIPLSSTQFSAQSLAQAIGSQIEDARHAAEPSLVGLPQTISGDSGGMSAVSDGSSSSLAASASLFPLKVLPLTTPLVDGEDESSSGASVVAIDNKIEQAMDLVKSHLMYAVREEVEVLKEQIKELIEKNSQLEQENNLLKTLASPEQLAQFQAQLQTGSPPATTQPQGTTQPPAQPASQGSGPTA</sequence>
<protein>
    <recommendedName>
        <fullName evidence="2">TSC22 domain family protein 1</fullName>
    </recommendedName>
</protein>
<dbReference type="EMBL" id="CR861255">
    <property type="protein sequence ID" value="CAH93323.1"/>
    <property type="molecule type" value="mRNA"/>
</dbReference>
<dbReference type="EMBL" id="CR861277">
    <property type="protein sequence ID" value="CAH93345.1"/>
    <property type="molecule type" value="mRNA"/>
</dbReference>
<dbReference type="RefSeq" id="NP_001126956.1">
    <molecule id="Q5R4H1-1"/>
    <property type="nucleotide sequence ID" value="NM_001133484.1"/>
</dbReference>
<dbReference type="RefSeq" id="NP_001126969.1">
    <molecule id="Q5R4H1-2"/>
    <property type="nucleotide sequence ID" value="NM_001133497.1"/>
</dbReference>
<dbReference type="SMR" id="Q5R4H1"/>
<dbReference type="FunCoup" id="Q5R4H1">
    <property type="interactions" value="2161"/>
</dbReference>
<dbReference type="STRING" id="9601.ENSPPYP00000006071"/>
<dbReference type="Ensembl" id="ENSPPYT00000059441.1">
    <molecule id="Q5R4H1-2"/>
    <property type="protein sequence ID" value="ENSPPYP00000032635.1"/>
    <property type="gene ID" value="ENSPPYG00000005330.3"/>
</dbReference>
<dbReference type="GeneID" id="100173988"/>
<dbReference type="KEGG" id="pon:100173988"/>
<dbReference type="CTD" id="8848"/>
<dbReference type="eggNOG" id="KOG4797">
    <property type="taxonomic scope" value="Eukaryota"/>
</dbReference>
<dbReference type="GeneTree" id="ENSGT00940000159144"/>
<dbReference type="InParanoid" id="Q5R4H1"/>
<dbReference type="OrthoDB" id="8961796at2759"/>
<dbReference type="Proteomes" id="UP000001595">
    <property type="component" value="Chromosome 13"/>
</dbReference>
<dbReference type="GO" id="GO:0005737">
    <property type="term" value="C:cytoplasm"/>
    <property type="evidence" value="ECO:0000250"/>
    <property type="project" value="UniProtKB"/>
</dbReference>
<dbReference type="GO" id="GO:0005829">
    <property type="term" value="C:cytosol"/>
    <property type="evidence" value="ECO:0007669"/>
    <property type="project" value="TreeGrafter"/>
</dbReference>
<dbReference type="GO" id="GO:0005739">
    <property type="term" value="C:mitochondrion"/>
    <property type="evidence" value="ECO:0007669"/>
    <property type="project" value="UniProtKB-SubCell"/>
</dbReference>
<dbReference type="GO" id="GO:0005634">
    <property type="term" value="C:nucleus"/>
    <property type="evidence" value="ECO:0007669"/>
    <property type="project" value="UniProtKB-SubCell"/>
</dbReference>
<dbReference type="GO" id="GO:0005886">
    <property type="term" value="C:plasma membrane"/>
    <property type="evidence" value="ECO:0000250"/>
    <property type="project" value="UniProtKB"/>
</dbReference>
<dbReference type="GO" id="GO:0043066">
    <property type="term" value="P:negative regulation of apoptotic process"/>
    <property type="evidence" value="ECO:0007669"/>
    <property type="project" value="TreeGrafter"/>
</dbReference>
<dbReference type="GO" id="GO:1902034">
    <property type="term" value="P:negative regulation of hematopoietic stem cell proliferation"/>
    <property type="evidence" value="ECO:0000250"/>
    <property type="project" value="UniProtKB"/>
</dbReference>
<dbReference type="GO" id="GO:0043069">
    <property type="term" value="P:negative regulation of programmed cell death"/>
    <property type="evidence" value="ECO:0000250"/>
    <property type="project" value="UniProtKB"/>
</dbReference>
<dbReference type="GO" id="GO:0043065">
    <property type="term" value="P:positive regulation of apoptotic process"/>
    <property type="evidence" value="ECO:0000250"/>
    <property type="project" value="UniProtKB"/>
</dbReference>
<dbReference type="GO" id="GO:0008284">
    <property type="term" value="P:positive regulation of cell population proliferation"/>
    <property type="evidence" value="ECO:0007669"/>
    <property type="project" value="TreeGrafter"/>
</dbReference>
<dbReference type="GO" id="GO:0043068">
    <property type="term" value="P:positive regulation of programmed cell death"/>
    <property type="evidence" value="ECO:0000250"/>
    <property type="project" value="UniProtKB"/>
</dbReference>
<dbReference type="GO" id="GO:0030511">
    <property type="term" value="P:positive regulation of transforming growth factor beta receptor signaling pathway"/>
    <property type="evidence" value="ECO:0000250"/>
    <property type="project" value="UniProtKB"/>
</dbReference>
<dbReference type="GO" id="GO:0006357">
    <property type="term" value="P:regulation of transcription by RNA polymerase II"/>
    <property type="evidence" value="ECO:0007669"/>
    <property type="project" value="InterPro"/>
</dbReference>
<dbReference type="CDD" id="cd21938">
    <property type="entry name" value="ZIP_TSC22D1"/>
    <property type="match status" value="1"/>
</dbReference>
<dbReference type="FunFam" id="1.20.5.490:FF:000002">
    <property type="entry name" value="TSC22 domain family, member 1"/>
    <property type="match status" value="1"/>
</dbReference>
<dbReference type="Gene3D" id="1.20.5.490">
    <property type="entry name" value="Single helix bin"/>
    <property type="match status" value="1"/>
</dbReference>
<dbReference type="InterPro" id="IPR000580">
    <property type="entry name" value="TSC22/Bun"/>
</dbReference>
<dbReference type="InterPro" id="IPR047862">
    <property type="entry name" value="TSC22/BUN_CS"/>
</dbReference>
<dbReference type="PANTHER" id="PTHR46745">
    <property type="entry name" value="TSC22 DOMAIN FAMILY PROTEIN 1"/>
    <property type="match status" value="1"/>
</dbReference>
<dbReference type="PANTHER" id="PTHR46745:SF1">
    <property type="entry name" value="TSC22 DOMAIN FAMILY PROTEIN 1"/>
    <property type="match status" value="1"/>
</dbReference>
<dbReference type="Pfam" id="PF01166">
    <property type="entry name" value="TSC22"/>
    <property type="match status" value="1"/>
</dbReference>
<dbReference type="SUPFAM" id="SSF58026">
    <property type="entry name" value="Delta-sleep-inducing peptide immunoreactive peptide"/>
    <property type="match status" value="1"/>
</dbReference>
<dbReference type="PROSITE" id="PS01289">
    <property type="entry name" value="TSC22"/>
    <property type="match status" value="1"/>
</dbReference>
<keyword id="KW-0025">Alternative splicing</keyword>
<keyword id="KW-1003">Cell membrane</keyword>
<keyword id="KW-0963">Cytoplasm</keyword>
<keyword id="KW-0472">Membrane</keyword>
<keyword id="KW-0496">Mitochondrion</keyword>
<keyword id="KW-0539">Nucleus</keyword>
<keyword id="KW-0597">Phosphoprotein</keyword>
<keyword id="KW-1185">Reference proteome</keyword>
<keyword id="KW-0678">Repressor</keyword>
<keyword id="KW-0804">Transcription</keyword>
<keyword id="KW-0805">Transcription regulation</keyword>
<comment type="function">
    <text evidence="1 2">Transcriptional repressor (By similarity). Acts on the C-type natriuretic peptide (CNP) promoter (By similarity). Acts to promote CASP3-mediated apoptosis (By similarity). Positively regulates TGF-beta signaling by interacting with SMAD7 which inhibits binding of SMAD7 to TGFBR1, preventing recruitment of SMURF ubiquitin ligases to TGFBR1 and inhibiting SMURF-mediated ubiquitination and degradation of TGFBR1 (By similarity). Contributes to enhancement of TGF-beta signaling by binding to and modulating the transcription activator activity of SMAD4 (By similarity). Promotes TGF-beta-induced transcription of COL1A2; via its interaction with TFE3 at E-boxes in the gene proximal promoter (By similarity). Plays a role in the repression of hematopoietic precursor cell growth (By similarity). Promotes IL2 deprivation-induced apoptosis in T-lymphocytes, via repression of TSC22D3/GILZ transcription and activation of the caspase cascade (By similarity).</text>
</comment>
<comment type="function">
    <molecule>Isoform 1</molecule>
    <text evidence="1">May act to negatively regulate TGFB3 signaling and thereby inhibit cell death in mammary gland cells.</text>
</comment>
<comment type="function">
    <molecule>Isoform 2</molecule>
    <text evidence="1">Positively regulates cell death in response to TGFB3 during mammary gland involution.</text>
</comment>
<comment type="subunit">
    <text evidence="1 2">Forms homodimers (By similarity). Forms heterodimers (By similarity). Component of a complex composed of TSC22D1 (via N-terminus), TGFBR1 and TGFBR2; the interaction between TSC22D1 and TGFBR1 is inhibited by SMAD7 and promoted by TGFB1 (By similarity). Interacts with SMAD7; the interaction requires TGF-beta and the interaction is inhibited by TGFBR1 (By similarity). Interacts with TPT1/fortilin; interaction results in the destabilization of TSC22D1 protein and prevents TSC22D1-mediated apoptosis (By similarity). Interacts with SMAD4 (via N-terminus) (By similarity). Interacts with ACVRL1/ALK1, ACVR1/ALK2, BMPR1A/ALK3, ACVR1B/ALK4, BMPR1B/ALK6, ACVR2A/ACTRII, and BMPR2 (By similarity). Interacts with SMAD6 (By similarity). Interacts with TFE3; the interaction is enhanced in the presence of TGF-beta (By similarity).</text>
</comment>
<comment type="subunit">
    <molecule>Isoform 1</molecule>
    <text evidence="2">Forms a heterodimer with TSC22D4/THG1.</text>
</comment>
<comment type="subunit">
    <molecule>Isoform 2</molecule>
    <text evidence="2">Forms a heterodimer with TSC22D4/THG1 (By similarity). Interacts with histone H1-2 (By similarity). Interacts with GNL3 (By similarity).</text>
</comment>
<comment type="subcellular location">
    <subcellularLocation>
        <location evidence="1">Cytoplasm</location>
    </subcellularLocation>
    <subcellularLocation>
        <location evidence="1">Nucleus</location>
    </subcellularLocation>
    <subcellularLocation>
        <location evidence="2">Cell membrane</location>
        <topology evidence="5">Peripheral membrane protein</topology>
    </subcellularLocation>
    <subcellularLocation>
        <location evidence="2">Mitochondrion</location>
    </subcellularLocation>
</comment>
<comment type="subcellular location">
    <molecule>Isoform 1</molecule>
    <subcellularLocation>
        <location evidence="2">Cytoplasm</location>
    </subcellularLocation>
    <subcellularLocation>
        <location evidence="2">Nucleus</location>
    </subcellularLocation>
    <subcellularLocation>
        <location evidence="2">Mitochondrion</location>
    </subcellularLocation>
</comment>
<comment type="subcellular location">
    <molecule>Isoform 2</molecule>
    <subcellularLocation>
        <location evidence="2">Cytoplasm</location>
    </subcellularLocation>
    <subcellularLocation>
        <location evidence="2">Nucleus</location>
    </subcellularLocation>
    <subcellularLocation>
        <location evidence="2">Mitochondrion</location>
    </subcellularLocation>
</comment>
<comment type="alternative products">
    <event type="alternative splicing"/>
    <isoform>
        <id>Q5R4H1-1</id>
        <name>1</name>
        <sequence type="displayed"/>
    </isoform>
    <isoform>
        <id>Q5R4H1-2</id>
        <name>2</name>
        <sequence type="described" ref="VSP_035330 VSP_035331"/>
    </isoform>
</comment>
<comment type="similarity">
    <text evidence="5">Belongs to the TSC-22/Dip/Bun family.</text>
</comment>
<feature type="chain" id="PRO_0000285810" description="TSC22 domain family protein 1">
    <location>
        <begin position="1"/>
        <end position="1070"/>
    </location>
</feature>
<feature type="region of interest" description="Disordered" evidence="3">
    <location>
        <begin position="1"/>
        <end position="110"/>
    </location>
</feature>
<feature type="region of interest" description="Required for interaction with TGFBR1 and promotion of TGF-beta signaling" evidence="2">
    <location>
        <begin position="1"/>
        <end position="98"/>
    </location>
</feature>
<feature type="region of interest" description="Disordered" evidence="3">
    <location>
        <begin position="125"/>
        <end position="289"/>
    </location>
</feature>
<feature type="region of interest" description="Disordered" evidence="3">
    <location>
        <begin position="458"/>
        <end position="487"/>
    </location>
</feature>
<feature type="region of interest" description="Disordered" evidence="3">
    <location>
        <begin position="604"/>
        <end position="637"/>
    </location>
</feature>
<feature type="region of interest" description="Disordered" evidence="3">
    <location>
        <begin position="830"/>
        <end position="858"/>
    </location>
</feature>
<feature type="region of interest" description="Leucine-zipper">
    <location>
        <begin position="1003"/>
        <end position="1024"/>
    </location>
</feature>
<feature type="region of interest" description="Disordered" evidence="3">
    <location>
        <begin position="1034"/>
        <end position="1070"/>
    </location>
</feature>
<feature type="compositionally biased region" description="Low complexity" evidence="3">
    <location>
        <begin position="36"/>
        <end position="45"/>
    </location>
</feature>
<feature type="compositionally biased region" description="Pro residues" evidence="3">
    <location>
        <begin position="58"/>
        <end position="70"/>
    </location>
</feature>
<feature type="compositionally biased region" description="Low complexity" evidence="3">
    <location>
        <begin position="84"/>
        <end position="100"/>
    </location>
</feature>
<feature type="compositionally biased region" description="Acidic residues" evidence="3">
    <location>
        <begin position="133"/>
        <end position="142"/>
    </location>
</feature>
<feature type="compositionally biased region" description="Basic residues" evidence="3">
    <location>
        <begin position="216"/>
        <end position="240"/>
    </location>
</feature>
<feature type="compositionally biased region" description="Low complexity" evidence="3">
    <location>
        <begin position="241"/>
        <end position="250"/>
    </location>
</feature>
<feature type="compositionally biased region" description="Polar residues" evidence="3">
    <location>
        <begin position="261"/>
        <end position="271"/>
    </location>
</feature>
<feature type="compositionally biased region" description="Low complexity" evidence="3">
    <location>
        <begin position="272"/>
        <end position="289"/>
    </location>
</feature>
<feature type="compositionally biased region" description="Low complexity" evidence="3">
    <location>
        <begin position="465"/>
        <end position="478"/>
    </location>
</feature>
<feature type="compositionally biased region" description="Pro residues" evidence="3">
    <location>
        <begin position="611"/>
        <end position="622"/>
    </location>
</feature>
<feature type="compositionally biased region" description="Low complexity" evidence="3">
    <location>
        <begin position="830"/>
        <end position="845"/>
    </location>
</feature>
<feature type="compositionally biased region" description="Polar residues" evidence="3">
    <location>
        <begin position="849"/>
        <end position="858"/>
    </location>
</feature>
<feature type="compositionally biased region" description="Low complexity" evidence="3">
    <location>
        <begin position="1041"/>
        <end position="1070"/>
    </location>
</feature>
<feature type="modified residue" description="Phosphoserine" evidence="2">
    <location>
        <position position="263"/>
    </location>
</feature>
<feature type="splice variant" id="VSP_035330" description="In isoform 2." evidence="4">
    <location>
        <begin position="1"/>
        <end position="926"/>
    </location>
</feature>
<feature type="splice variant" id="VSP_035331" description="In isoform 2." evidence="4">
    <original>GDSGGMSAVSDGSSSSLAASASLFPLKVLPLTTPLVDGEDE</original>
    <variation>MKSQWCRPVAMDLGVYQLRHFSISFLSSLLGTENASVRLDN</variation>
    <location>
        <begin position="927"/>
        <end position="967"/>
    </location>
</feature>
<reference key="1">
    <citation type="submission" date="2004-11" db="EMBL/GenBank/DDBJ databases">
        <authorList>
            <consortium name="The German cDNA consortium"/>
        </authorList>
    </citation>
    <scope>NUCLEOTIDE SEQUENCE [LARGE SCALE MRNA] (ISOFORMS 1 AND 2)</scope>
    <source>
        <tissue>Brain cortex</tissue>
    </source>
</reference>
<accession>Q5R4H1</accession>
<accession>Q5R4J3</accession>
<gene>
    <name evidence="2" type="primary">TSC22D1</name>
</gene>
<evidence type="ECO:0000250" key="1">
    <source>
        <dbReference type="UniProtKB" id="P62500"/>
    </source>
</evidence>
<evidence type="ECO:0000250" key="2">
    <source>
        <dbReference type="UniProtKB" id="Q15714"/>
    </source>
</evidence>
<evidence type="ECO:0000256" key="3">
    <source>
        <dbReference type="SAM" id="MobiDB-lite"/>
    </source>
</evidence>
<evidence type="ECO:0000303" key="4">
    <source ref="1"/>
</evidence>
<evidence type="ECO:0000305" key="5"/>
<organism>
    <name type="scientific">Pongo abelii</name>
    <name type="common">Sumatran orangutan</name>
    <name type="synonym">Pongo pygmaeus abelii</name>
    <dbReference type="NCBI Taxonomy" id="9601"/>
    <lineage>
        <taxon>Eukaryota</taxon>
        <taxon>Metazoa</taxon>
        <taxon>Chordata</taxon>
        <taxon>Craniata</taxon>
        <taxon>Vertebrata</taxon>
        <taxon>Euteleostomi</taxon>
        <taxon>Mammalia</taxon>
        <taxon>Eutheria</taxon>
        <taxon>Euarchontoglires</taxon>
        <taxon>Primates</taxon>
        <taxon>Haplorrhini</taxon>
        <taxon>Catarrhini</taxon>
        <taxon>Hominidae</taxon>
        <taxon>Pongo</taxon>
    </lineage>
</organism>
<name>T22D1_PONAB</name>